<evidence type="ECO:0000255" key="1">
    <source>
        <dbReference type="HAMAP-Rule" id="MF_00093"/>
    </source>
</evidence>
<protein>
    <recommendedName>
        <fullName evidence="1">Peptide chain release factor 1</fullName>
        <shortName evidence="1">RF-1</shortName>
    </recommendedName>
</protein>
<sequence length="360" mass="40483">MKTSMQSKLDQLTTRLAELNDLLSRENVTADLDQYRKLTREHAEIGPVVEHYAQWRQARADELAAQELLADASMRDFAEDELRGARDRMGRLAAELQTMLLPKDPNDERNIFVEIRAGTGGDESALFAGNLLRMYLRYAERQRWQVEMMSESPSDLGGYKEVIVRIAGYGAYSRLKFESGGHRVQRVPATETQGRIHTSACTVAVMPEADEIGEVEINPADLRIDTFRASGAGGQHINKTDSAVRVTHIPTGIVVECQDDRSQHKNKDRALKVLAARIKDKQYHEQHAKEAATRKSLIGSGDRSERIRTYNFPQGRMTDHRINLTLYKLEQIMDGDLDELIAALVSEHQAELLASLGDAE</sequence>
<name>RF1_BURM7</name>
<accession>A3MFT4</accession>
<feature type="chain" id="PRO_1000004864" description="Peptide chain release factor 1">
    <location>
        <begin position="1"/>
        <end position="360"/>
    </location>
</feature>
<feature type="modified residue" description="N5-methylglutamine" evidence="1">
    <location>
        <position position="235"/>
    </location>
</feature>
<comment type="function">
    <text evidence="1">Peptide chain release factor 1 directs the termination of translation in response to the peptide chain termination codons UAG and UAA.</text>
</comment>
<comment type="subcellular location">
    <subcellularLocation>
        <location evidence="1">Cytoplasm</location>
    </subcellularLocation>
</comment>
<comment type="PTM">
    <text evidence="1">Methylated by PrmC. Methylation increases the termination efficiency of RF1.</text>
</comment>
<comment type="similarity">
    <text evidence="1">Belongs to the prokaryotic/mitochondrial release factor family.</text>
</comment>
<organism>
    <name type="scientific">Burkholderia mallei (strain NCTC 10247)</name>
    <dbReference type="NCBI Taxonomy" id="320389"/>
    <lineage>
        <taxon>Bacteria</taxon>
        <taxon>Pseudomonadati</taxon>
        <taxon>Pseudomonadota</taxon>
        <taxon>Betaproteobacteria</taxon>
        <taxon>Burkholderiales</taxon>
        <taxon>Burkholderiaceae</taxon>
        <taxon>Burkholderia</taxon>
        <taxon>pseudomallei group</taxon>
    </lineage>
</organism>
<keyword id="KW-0963">Cytoplasm</keyword>
<keyword id="KW-0488">Methylation</keyword>
<keyword id="KW-0648">Protein biosynthesis</keyword>
<proteinExistence type="inferred from homology"/>
<gene>
    <name evidence="1" type="primary">prfA</name>
    <name type="ordered locus">BMA10247_A1943</name>
</gene>
<reference key="1">
    <citation type="journal article" date="2010" name="Genome Biol. Evol.">
        <title>Continuing evolution of Burkholderia mallei through genome reduction and large-scale rearrangements.</title>
        <authorList>
            <person name="Losada L."/>
            <person name="Ronning C.M."/>
            <person name="DeShazer D."/>
            <person name="Woods D."/>
            <person name="Fedorova N."/>
            <person name="Kim H.S."/>
            <person name="Shabalina S.A."/>
            <person name="Pearson T.R."/>
            <person name="Brinkac L."/>
            <person name="Tan P."/>
            <person name="Nandi T."/>
            <person name="Crabtree J."/>
            <person name="Badger J."/>
            <person name="Beckstrom-Sternberg S."/>
            <person name="Saqib M."/>
            <person name="Schutzer S.E."/>
            <person name="Keim P."/>
            <person name="Nierman W.C."/>
        </authorList>
    </citation>
    <scope>NUCLEOTIDE SEQUENCE [LARGE SCALE GENOMIC DNA]</scope>
    <source>
        <strain>NCTC 10247</strain>
    </source>
</reference>
<dbReference type="EMBL" id="CP000547">
    <property type="protein sequence ID" value="ABO03184.1"/>
    <property type="molecule type" value="Genomic_DNA"/>
</dbReference>
<dbReference type="RefSeq" id="WP_004186862.1">
    <property type="nucleotide sequence ID" value="NZ_CP007801.1"/>
</dbReference>
<dbReference type="SMR" id="A3MFT4"/>
<dbReference type="GeneID" id="92976802"/>
<dbReference type="KEGG" id="bmaz:BM44_4047"/>
<dbReference type="KEGG" id="bmn:BMA10247_A1943"/>
<dbReference type="PATRIC" id="fig|320389.8.peg.4601"/>
<dbReference type="GO" id="GO:0005737">
    <property type="term" value="C:cytoplasm"/>
    <property type="evidence" value="ECO:0007669"/>
    <property type="project" value="UniProtKB-SubCell"/>
</dbReference>
<dbReference type="GO" id="GO:0016149">
    <property type="term" value="F:translation release factor activity, codon specific"/>
    <property type="evidence" value="ECO:0007669"/>
    <property type="project" value="UniProtKB-UniRule"/>
</dbReference>
<dbReference type="FunFam" id="3.30.160.20:FF:000004">
    <property type="entry name" value="Peptide chain release factor 1"/>
    <property type="match status" value="1"/>
</dbReference>
<dbReference type="FunFam" id="3.30.70.1660:FF:000002">
    <property type="entry name" value="Peptide chain release factor 1"/>
    <property type="match status" value="1"/>
</dbReference>
<dbReference type="FunFam" id="3.30.70.1660:FF:000004">
    <property type="entry name" value="Peptide chain release factor 1"/>
    <property type="match status" value="1"/>
</dbReference>
<dbReference type="Gene3D" id="3.30.160.20">
    <property type="match status" value="1"/>
</dbReference>
<dbReference type="Gene3D" id="3.30.70.1660">
    <property type="match status" value="1"/>
</dbReference>
<dbReference type="Gene3D" id="6.10.140.1950">
    <property type="match status" value="1"/>
</dbReference>
<dbReference type="HAMAP" id="MF_00093">
    <property type="entry name" value="Rel_fac_1"/>
    <property type="match status" value="1"/>
</dbReference>
<dbReference type="InterPro" id="IPR005139">
    <property type="entry name" value="PCRF"/>
</dbReference>
<dbReference type="InterPro" id="IPR000352">
    <property type="entry name" value="Pep_chain_release_fac_I"/>
</dbReference>
<dbReference type="InterPro" id="IPR045853">
    <property type="entry name" value="Pep_chain_release_fac_I_sf"/>
</dbReference>
<dbReference type="InterPro" id="IPR050057">
    <property type="entry name" value="Prokaryotic/Mito_RF"/>
</dbReference>
<dbReference type="InterPro" id="IPR004373">
    <property type="entry name" value="RF-1"/>
</dbReference>
<dbReference type="NCBIfam" id="TIGR00019">
    <property type="entry name" value="prfA"/>
    <property type="match status" value="1"/>
</dbReference>
<dbReference type="NCBIfam" id="NF001859">
    <property type="entry name" value="PRK00591.1"/>
    <property type="match status" value="1"/>
</dbReference>
<dbReference type="PANTHER" id="PTHR43804">
    <property type="entry name" value="LD18447P"/>
    <property type="match status" value="1"/>
</dbReference>
<dbReference type="PANTHER" id="PTHR43804:SF7">
    <property type="entry name" value="LD18447P"/>
    <property type="match status" value="1"/>
</dbReference>
<dbReference type="Pfam" id="PF03462">
    <property type="entry name" value="PCRF"/>
    <property type="match status" value="1"/>
</dbReference>
<dbReference type="Pfam" id="PF00472">
    <property type="entry name" value="RF-1"/>
    <property type="match status" value="1"/>
</dbReference>
<dbReference type="SMART" id="SM00937">
    <property type="entry name" value="PCRF"/>
    <property type="match status" value="1"/>
</dbReference>
<dbReference type="SUPFAM" id="SSF75620">
    <property type="entry name" value="Release factor"/>
    <property type="match status" value="1"/>
</dbReference>
<dbReference type="PROSITE" id="PS00745">
    <property type="entry name" value="RF_PROK_I"/>
    <property type="match status" value="1"/>
</dbReference>